<accession>Q9KMP4</accession>
<proteinExistence type="inferred from homology"/>
<feature type="chain" id="PRO_0000113691" description="Serine hydroxymethyltransferase 2">
    <location>
        <begin position="1"/>
        <end position="435"/>
    </location>
</feature>
<feature type="binding site" evidence="1">
    <location>
        <position position="135"/>
    </location>
    <ligand>
        <name>(6S)-5,6,7,8-tetrahydrofolate</name>
        <dbReference type="ChEBI" id="CHEBI:57453"/>
    </ligand>
</feature>
<feature type="binding site" evidence="1">
    <location>
        <begin position="139"/>
        <end position="141"/>
    </location>
    <ligand>
        <name>(6S)-5,6,7,8-tetrahydrofolate</name>
        <dbReference type="ChEBI" id="CHEBI:57453"/>
    </ligand>
</feature>
<feature type="binding site" evidence="1">
    <location>
        <position position="260"/>
    </location>
    <ligand>
        <name>(6S)-5,6,7,8-tetrahydrofolate</name>
        <dbReference type="ChEBI" id="CHEBI:57453"/>
    </ligand>
</feature>
<feature type="site" description="Plays an important role in substrate specificity" evidence="1">
    <location>
        <position position="243"/>
    </location>
</feature>
<feature type="modified residue" description="N6-(pyridoxal phosphate)lysine" evidence="1">
    <location>
        <position position="244"/>
    </location>
</feature>
<protein>
    <recommendedName>
        <fullName evidence="1">Serine hydroxymethyltransferase 2</fullName>
        <shortName evidence="1">SHMT 2</shortName>
        <shortName evidence="1">Serine methylase 2</shortName>
        <ecNumber evidence="1">2.1.2.1</ecNumber>
    </recommendedName>
</protein>
<sequence>MNANLNKAYPNVSLENFFSTPLAATNDAVFAAIQAEYTRQNEQIELIASENIVSKAVMQAQGTCLTNKYAEGYPGRRYYGGCEHVDSVEQIAIERAKMLFQCQYANVQPHSGAQANGAVMLALLQPGDTIMGMSLDAGGHLTHGARPALSGKWFNAVQYGVDRQTLEINYDSVRALALEHKPKMIIAGGSAIPRTIDFAQFRSIVDEVGALLMVDMAHIAGLVATGAHPSPLPHAHVVTTTTHKTLRGPRGGMILTNSEEIHKKINSAVFPGLQGGPLMHVIAAKAVAFGEALGPEFRTYIDSVIDNAKVLAEVLQTRGCDIVTGGTDTHLMLVDLRPKGLKGNQVEQALERAGITCNKNGIPFDEEKPMITSGIRLGTPAGTSRGFGREEFKLIGEWIGDVLDGLVASPEGNPDVEQQVRKQVKALCQRFPLYQ</sequence>
<comment type="function">
    <text evidence="1">Catalyzes the reversible interconversion of serine and glycine with tetrahydrofolate (THF) serving as the one-carbon carrier. This reaction serves as the major source of one-carbon groups required for the biosynthesis of purines, thymidylate, methionine, and other important biomolecules. Also exhibits THF-independent aldolase activity toward beta-hydroxyamino acids, producing glycine and aldehydes, via a retro-aldol mechanism.</text>
</comment>
<comment type="catalytic activity">
    <reaction evidence="1">
        <text>(6R)-5,10-methylene-5,6,7,8-tetrahydrofolate + glycine + H2O = (6S)-5,6,7,8-tetrahydrofolate + L-serine</text>
        <dbReference type="Rhea" id="RHEA:15481"/>
        <dbReference type="ChEBI" id="CHEBI:15377"/>
        <dbReference type="ChEBI" id="CHEBI:15636"/>
        <dbReference type="ChEBI" id="CHEBI:33384"/>
        <dbReference type="ChEBI" id="CHEBI:57305"/>
        <dbReference type="ChEBI" id="CHEBI:57453"/>
        <dbReference type="EC" id="2.1.2.1"/>
    </reaction>
</comment>
<comment type="cofactor">
    <cofactor evidence="1">
        <name>pyridoxal 5'-phosphate</name>
        <dbReference type="ChEBI" id="CHEBI:597326"/>
    </cofactor>
</comment>
<comment type="pathway">
    <text evidence="1">One-carbon metabolism; tetrahydrofolate interconversion.</text>
</comment>
<comment type="pathway">
    <text evidence="1">Amino-acid biosynthesis; glycine biosynthesis; glycine from L-serine: step 1/1.</text>
</comment>
<comment type="subunit">
    <text evidence="1">Homodimer.</text>
</comment>
<comment type="subcellular location">
    <subcellularLocation>
        <location evidence="1">Cytoplasm</location>
    </subcellularLocation>
</comment>
<comment type="similarity">
    <text evidence="1">Belongs to the SHMT family.</text>
</comment>
<keyword id="KW-0028">Amino-acid biosynthesis</keyword>
<keyword id="KW-0963">Cytoplasm</keyword>
<keyword id="KW-0554">One-carbon metabolism</keyword>
<keyword id="KW-0663">Pyridoxal phosphate</keyword>
<keyword id="KW-1185">Reference proteome</keyword>
<keyword id="KW-0808">Transferase</keyword>
<evidence type="ECO:0000255" key="1">
    <source>
        <dbReference type="HAMAP-Rule" id="MF_00051"/>
    </source>
</evidence>
<organism>
    <name type="scientific">Vibrio cholerae serotype O1 (strain ATCC 39315 / El Tor Inaba N16961)</name>
    <dbReference type="NCBI Taxonomy" id="243277"/>
    <lineage>
        <taxon>Bacteria</taxon>
        <taxon>Pseudomonadati</taxon>
        <taxon>Pseudomonadota</taxon>
        <taxon>Gammaproteobacteria</taxon>
        <taxon>Vibrionales</taxon>
        <taxon>Vibrionaceae</taxon>
        <taxon>Vibrio</taxon>
    </lineage>
</organism>
<name>GLYA2_VIBCH</name>
<gene>
    <name evidence="1" type="primary">glyA2</name>
    <name type="ordered locus">VC_A0278</name>
</gene>
<dbReference type="EC" id="2.1.2.1" evidence="1"/>
<dbReference type="EMBL" id="AE003853">
    <property type="protein sequence ID" value="AAF96188.1"/>
    <property type="molecule type" value="Genomic_DNA"/>
</dbReference>
<dbReference type="PIR" id="A82480">
    <property type="entry name" value="A82480"/>
</dbReference>
<dbReference type="RefSeq" id="NP_232675.1">
    <property type="nucleotide sequence ID" value="NC_002506.1"/>
</dbReference>
<dbReference type="RefSeq" id="WP_000993300.1">
    <property type="nucleotide sequence ID" value="NZ_LT906615.1"/>
</dbReference>
<dbReference type="SMR" id="Q9KMP4"/>
<dbReference type="STRING" id="243277.VC_A0278"/>
<dbReference type="DNASU" id="2612058"/>
<dbReference type="EnsemblBacteria" id="AAF96188">
    <property type="protein sequence ID" value="AAF96188"/>
    <property type="gene ID" value="VC_A0278"/>
</dbReference>
<dbReference type="KEGG" id="vch:VC_A0278"/>
<dbReference type="PATRIC" id="fig|243277.26.peg.2912"/>
<dbReference type="eggNOG" id="COG0112">
    <property type="taxonomic scope" value="Bacteria"/>
</dbReference>
<dbReference type="HOGENOM" id="CLU_022477_2_1_6"/>
<dbReference type="UniPathway" id="UPA00193"/>
<dbReference type="UniPathway" id="UPA00288">
    <property type="reaction ID" value="UER01023"/>
</dbReference>
<dbReference type="Proteomes" id="UP000000584">
    <property type="component" value="Chromosome 2"/>
</dbReference>
<dbReference type="GO" id="GO:0005737">
    <property type="term" value="C:cytoplasm"/>
    <property type="evidence" value="ECO:0000318"/>
    <property type="project" value="GO_Central"/>
</dbReference>
<dbReference type="GO" id="GO:0005829">
    <property type="term" value="C:cytosol"/>
    <property type="evidence" value="ECO:0000318"/>
    <property type="project" value="GO_Central"/>
</dbReference>
<dbReference type="GO" id="GO:0004372">
    <property type="term" value="F:glycine hydroxymethyltransferase activity"/>
    <property type="evidence" value="ECO:0000318"/>
    <property type="project" value="GO_Central"/>
</dbReference>
<dbReference type="GO" id="GO:0030170">
    <property type="term" value="F:pyridoxal phosphate binding"/>
    <property type="evidence" value="ECO:0000318"/>
    <property type="project" value="GO_Central"/>
</dbReference>
<dbReference type="GO" id="GO:0019264">
    <property type="term" value="P:glycine biosynthetic process from serine"/>
    <property type="evidence" value="ECO:0000318"/>
    <property type="project" value="GO_Central"/>
</dbReference>
<dbReference type="GO" id="GO:0035999">
    <property type="term" value="P:tetrahydrofolate interconversion"/>
    <property type="evidence" value="ECO:0007669"/>
    <property type="project" value="UniProtKB-UniRule"/>
</dbReference>
<dbReference type="GO" id="GO:0046653">
    <property type="term" value="P:tetrahydrofolate metabolic process"/>
    <property type="evidence" value="ECO:0000318"/>
    <property type="project" value="GO_Central"/>
</dbReference>
<dbReference type="CDD" id="cd00378">
    <property type="entry name" value="SHMT"/>
    <property type="match status" value="1"/>
</dbReference>
<dbReference type="FunFam" id="3.40.640.10:FF:000001">
    <property type="entry name" value="Serine hydroxymethyltransferase"/>
    <property type="match status" value="1"/>
</dbReference>
<dbReference type="FunFam" id="3.90.1150.10:FF:000003">
    <property type="entry name" value="Serine hydroxymethyltransferase"/>
    <property type="match status" value="1"/>
</dbReference>
<dbReference type="Gene3D" id="3.90.1150.10">
    <property type="entry name" value="Aspartate Aminotransferase, domain 1"/>
    <property type="match status" value="1"/>
</dbReference>
<dbReference type="Gene3D" id="3.40.640.10">
    <property type="entry name" value="Type I PLP-dependent aspartate aminotransferase-like (Major domain)"/>
    <property type="match status" value="1"/>
</dbReference>
<dbReference type="HAMAP" id="MF_00051">
    <property type="entry name" value="SHMT"/>
    <property type="match status" value="1"/>
</dbReference>
<dbReference type="InterPro" id="IPR015424">
    <property type="entry name" value="PyrdxlP-dep_Trfase"/>
</dbReference>
<dbReference type="InterPro" id="IPR015421">
    <property type="entry name" value="PyrdxlP-dep_Trfase_major"/>
</dbReference>
<dbReference type="InterPro" id="IPR015422">
    <property type="entry name" value="PyrdxlP-dep_Trfase_small"/>
</dbReference>
<dbReference type="InterPro" id="IPR001085">
    <property type="entry name" value="Ser_HO-MeTrfase"/>
</dbReference>
<dbReference type="InterPro" id="IPR049943">
    <property type="entry name" value="Ser_HO-MeTrfase-like"/>
</dbReference>
<dbReference type="InterPro" id="IPR019798">
    <property type="entry name" value="Ser_HO-MeTrfase_PLP_BS"/>
</dbReference>
<dbReference type="InterPro" id="IPR039429">
    <property type="entry name" value="SHMT-like_dom"/>
</dbReference>
<dbReference type="NCBIfam" id="NF000586">
    <property type="entry name" value="PRK00011.1"/>
    <property type="match status" value="1"/>
</dbReference>
<dbReference type="PANTHER" id="PTHR11680">
    <property type="entry name" value="SERINE HYDROXYMETHYLTRANSFERASE"/>
    <property type="match status" value="1"/>
</dbReference>
<dbReference type="PANTHER" id="PTHR11680:SF35">
    <property type="entry name" value="SERINE HYDROXYMETHYLTRANSFERASE 1"/>
    <property type="match status" value="1"/>
</dbReference>
<dbReference type="Pfam" id="PF00464">
    <property type="entry name" value="SHMT"/>
    <property type="match status" value="1"/>
</dbReference>
<dbReference type="PIRSF" id="PIRSF000412">
    <property type="entry name" value="SHMT"/>
    <property type="match status" value="1"/>
</dbReference>
<dbReference type="SUPFAM" id="SSF53383">
    <property type="entry name" value="PLP-dependent transferases"/>
    <property type="match status" value="1"/>
</dbReference>
<dbReference type="PROSITE" id="PS00096">
    <property type="entry name" value="SHMT"/>
    <property type="match status" value="1"/>
</dbReference>
<reference key="1">
    <citation type="journal article" date="2000" name="Nature">
        <title>DNA sequence of both chromosomes of the cholera pathogen Vibrio cholerae.</title>
        <authorList>
            <person name="Heidelberg J.F."/>
            <person name="Eisen J.A."/>
            <person name="Nelson W.C."/>
            <person name="Clayton R.A."/>
            <person name="Gwinn M.L."/>
            <person name="Dodson R.J."/>
            <person name="Haft D.H."/>
            <person name="Hickey E.K."/>
            <person name="Peterson J.D."/>
            <person name="Umayam L.A."/>
            <person name="Gill S.R."/>
            <person name="Nelson K.E."/>
            <person name="Read T.D."/>
            <person name="Tettelin H."/>
            <person name="Richardson D.L."/>
            <person name="Ermolaeva M.D."/>
            <person name="Vamathevan J.J."/>
            <person name="Bass S."/>
            <person name="Qin H."/>
            <person name="Dragoi I."/>
            <person name="Sellers P."/>
            <person name="McDonald L.A."/>
            <person name="Utterback T.R."/>
            <person name="Fleischmann R.D."/>
            <person name="Nierman W.C."/>
            <person name="White O."/>
            <person name="Salzberg S.L."/>
            <person name="Smith H.O."/>
            <person name="Colwell R.R."/>
            <person name="Mekalanos J.J."/>
            <person name="Venter J.C."/>
            <person name="Fraser C.M."/>
        </authorList>
    </citation>
    <scope>NUCLEOTIDE SEQUENCE [LARGE SCALE GENOMIC DNA]</scope>
    <source>
        <strain>ATCC 39315 / El Tor Inaba N16961</strain>
    </source>
</reference>